<reference key="1">
    <citation type="journal article" date="2007" name="Nat. Biotechnol.">
        <title>Complete genome sequence of the myxobacterium Sorangium cellulosum.</title>
        <authorList>
            <person name="Schneiker S."/>
            <person name="Perlova O."/>
            <person name="Kaiser O."/>
            <person name="Gerth K."/>
            <person name="Alici A."/>
            <person name="Altmeyer M.O."/>
            <person name="Bartels D."/>
            <person name="Bekel T."/>
            <person name="Beyer S."/>
            <person name="Bode E."/>
            <person name="Bode H.B."/>
            <person name="Bolten C.J."/>
            <person name="Choudhuri J.V."/>
            <person name="Doss S."/>
            <person name="Elnakady Y.A."/>
            <person name="Frank B."/>
            <person name="Gaigalat L."/>
            <person name="Goesmann A."/>
            <person name="Groeger C."/>
            <person name="Gross F."/>
            <person name="Jelsbak L."/>
            <person name="Jelsbak L."/>
            <person name="Kalinowski J."/>
            <person name="Kegler C."/>
            <person name="Knauber T."/>
            <person name="Konietzny S."/>
            <person name="Kopp M."/>
            <person name="Krause L."/>
            <person name="Krug D."/>
            <person name="Linke B."/>
            <person name="Mahmud T."/>
            <person name="Martinez-Arias R."/>
            <person name="McHardy A.C."/>
            <person name="Merai M."/>
            <person name="Meyer F."/>
            <person name="Mormann S."/>
            <person name="Munoz-Dorado J."/>
            <person name="Perez J."/>
            <person name="Pradella S."/>
            <person name="Rachid S."/>
            <person name="Raddatz G."/>
            <person name="Rosenau F."/>
            <person name="Rueckert C."/>
            <person name="Sasse F."/>
            <person name="Scharfe M."/>
            <person name="Schuster S.C."/>
            <person name="Suen G."/>
            <person name="Treuner-Lange A."/>
            <person name="Velicer G.J."/>
            <person name="Vorholter F.-J."/>
            <person name="Weissman K.J."/>
            <person name="Welch R.D."/>
            <person name="Wenzel S.C."/>
            <person name="Whitworth D.E."/>
            <person name="Wilhelm S."/>
            <person name="Wittmann C."/>
            <person name="Bloecker H."/>
            <person name="Puehler A."/>
            <person name="Mueller R."/>
        </authorList>
    </citation>
    <scope>NUCLEOTIDE SEQUENCE [LARGE SCALE GENOMIC DNA]</scope>
    <source>
        <strain>So ce56</strain>
    </source>
</reference>
<accession>A9FGF3</accession>
<gene>
    <name evidence="1" type="primary">rpmD</name>
    <name type="ordered locus">sce7945</name>
</gene>
<sequence>MKLRVRQKASNIGQVEHTRKIIKGLGLRGPGSEVVVANTPSFRGMVKKVLHLVEVEEVADGATSSKA</sequence>
<dbReference type="EMBL" id="AM746676">
    <property type="protein sequence ID" value="CAN98115.1"/>
    <property type="molecule type" value="Genomic_DNA"/>
</dbReference>
<dbReference type="RefSeq" id="WP_012240554.1">
    <property type="nucleotide sequence ID" value="NC_010162.1"/>
</dbReference>
<dbReference type="SMR" id="A9FGF3"/>
<dbReference type="STRING" id="448385.sce7945"/>
<dbReference type="KEGG" id="scl:sce7945"/>
<dbReference type="eggNOG" id="COG1841">
    <property type="taxonomic scope" value="Bacteria"/>
</dbReference>
<dbReference type="HOGENOM" id="CLU_131047_1_3_7"/>
<dbReference type="OrthoDB" id="9812790at2"/>
<dbReference type="BioCyc" id="SCEL448385:SCE_RS40670-MONOMER"/>
<dbReference type="Proteomes" id="UP000002139">
    <property type="component" value="Chromosome"/>
</dbReference>
<dbReference type="GO" id="GO:0015934">
    <property type="term" value="C:large ribosomal subunit"/>
    <property type="evidence" value="ECO:0007669"/>
    <property type="project" value="InterPro"/>
</dbReference>
<dbReference type="GO" id="GO:0003735">
    <property type="term" value="F:structural constituent of ribosome"/>
    <property type="evidence" value="ECO:0007669"/>
    <property type="project" value="InterPro"/>
</dbReference>
<dbReference type="GO" id="GO:0006412">
    <property type="term" value="P:translation"/>
    <property type="evidence" value="ECO:0007669"/>
    <property type="project" value="InterPro"/>
</dbReference>
<dbReference type="CDD" id="cd01658">
    <property type="entry name" value="Ribosomal_L30"/>
    <property type="match status" value="1"/>
</dbReference>
<dbReference type="Gene3D" id="3.30.1390.20">
    <property type="entry name" value="Ribosomal protein L30, ferredoxin-like fold domain"/>
    <property type="match status" value="1"/>
</dbReference>
<dbReference type="HAMAP" id="MF_01371_B">
    <property type="entry name" value="Ribosomal_uL30_B"/>
    <property type="match status" value="1"/>
</dbReference>
<dbReference type="InterPro" id="IPR036919">
    <property type="entry name" value="Ribo_uL30_ferredoxin-like_sf"/>
</dbReference>
<dbReference type="InterPro" id="IPR005996">
    <property type="entry name" value="Ribosomal_uL30_bac-type"/>
</dbReference>
<dbReference type="InterPro" id="IPR018038">
    <property type="entry name" value="Ribosomal_uL30_CS"/>
</dbReference>
<dbReference type="InterPro" id="IPR016082">
    <property type="entry name" value="Ribosomal_uL30_ferredoxin-like"/>
</dbReference>
<dbReference type="NCBIfam" id="TIGR01308">
    <property type="entry name" value="rpmD_bact"/>
    <property type="match status" value="1"/>
</dbReference>
<dbReference type="Pfam" id="PF00327">
    <property type="entry name" value="Ribosomal_L30"/>
    <property type="match status" value="1"/>
</dbReference>
<dbReference type="PIRSF" id="PIRSF002211">
    <property type="entry name" value="Ribosomal_L30_bac-type"/>
    <property type="match status" value="1"/>
</dbReference>
<dbReference type="SUPFAM" id="SSF55129">
    <property type="entry name" value="Ribosomal protein L30p/L7e"/>
    <property type="match status" value="1"/>
</dbReference>
<dbReference type="PROSITE" id="PS00634">
    <property type="entry name" value="RIBOSOMAL_L30"/>
    <property type="match status" value="1"/>
</dbReference>
<name>RL30_SORC5</name>
<feature type="chain" id="PRO_0000347145" description="Large ribosomal subunit protein uL30">
    <location>
        <begin position="1"/>
        <end position="67"/>
    </location>
</feature>
<comment type="subunit">
    <text evidence="1">Part of the 50S ribosomal subunit.</text>
</comment>
<comment type="similarity">
    <text evidence="1">Belongs to the universal ribosomal protein uL30 family.</text>
</comment>
<proteinExistence type="inferred from homology"/>
<organism>
    <name type="scientific">Sorangium cellulosum (strain So ce56)</name>
    <name type="common">Polyangium cellulosum (strain So ce56)</name>
    <dbReference type="NCBI Taxonomy" id="448385"/>
    <lineage>
        <taxon>Bacteria</taxon>
        <taxon>Pseudomonadati</taxon>
        <taxon>Myxococcota</taxon>
        <taxon>Polyangia</taxon>
        <taxon>Polyangiales</taxon>
        <taxon>Polyangiaceae</taxon>
        <taxon>Sorangium</taxon>
    </lineage>
</organism>
<protein>
    <recommendedName>
        <fullName evidence="1">Large ribosomal subunit protein uL30</fullName>
    </recommendedName>
    <alternativeName>
        <fullName evidence="2">50S ribosomal protein L30</fullName>
    </alternativeName>
</protein>
<keyword id="KW-1185">Reference proteome</keyword>
<keyword id="KW-0687">Ribonucleoprotein</keyword>
<keyword id="KW-0689">Ribosomal protein</keyword>
<evidence type="ECO:0000255" key="1">
    <source>
        <dbReference type="HAMAP-Rule" id="MF_01371"/>
    </source>
</evidence>
<evidence type="ECO:0000305" key="2"/>